<proteinExistence type="inferred from homology"/>
<feature type="chain" id="PRO_0000330276" description="rRNA-processing protein efg1">
    <location>
        <begin position="1"/>
        <end position="318"/>
    </location>
</feature>
<feature type="region of interest" description="Disordered" evidence="3">
    <location>
        <begin position="1"/>
        <end position="52"/>
    </location>
</feature>
<feature type="region of interest" description="Disordered" evidence="3">
    <location>
        <begin position="181"/>
        <end position="203"/>
    </location>
</feature>
<feature type="region of interest" description="Disordered" evidence="3">
    <location>
        <begin position="229"/>
        <end position="318"/>
    </location>
</feature>
<feature type="coiled-coil region" evidence="2">
    <location>
        <begin position="49"/>
        <end position="69"/>
    </location>
</feature>
<feature type="coiled-coil region" evidence="2">
    <location>
        <begin position="111"/>
        <end position="146"/>
    </location>
</feature>
<feature type="compositionally biased region" description="Basic and acidic residues" evidence="3">
    <location>
        <begin position="1"/>
        <end position="12"/>
    </location>
</feature>
<feature type="compositionally biased region" description="Basic and acidic residues" evidence="3">
    <location>
        <begin position="229"/>
        <end position="288"/>
    </location>
</feature>
<feature type="compositionally biased region" description="Acidic residues" evidence="3">
    <location>
        <begin position="305"/>
        <end position="318"/>
    </location>
</feature>
<accession>A1CYY6</accession>
<dbReference type="EMBL" id="DS027686">
    <property type="protein sequence ID" value="EAW23956.1"/>
    <property type="status" value="ALT_SEQ"/>
    <property type="molecule type" value="Genomic_DNA"/>
</dbReference>
<dbReference type="RefSeq" id="XP_001265853.1">
    <property type="nucleotide sequence ID" value="XM_001265852.1"/>
</dbReference>
<dbReference type="SMR" id="A1CYY6"/>
<dbReference type="STRING" id="331117.A1CYY6"/>
<dbReference type="GeneID" id="4592257"/>
<dbReference type="KEGG" id="nfi:NFIA_035240"/>
<dbReference type="VEuPathDB" id="FungiDB:NFIA_035240"/>
<dbReference type="eggNOG" id="KOG4484">
    <property type="taxonomic scope" value="Eukaryota"/>
</dbReference>
<dbReference type="OrthoDB" id="47732at2759"/>
<dbReference type="Proteomes" id="UP000006702">
    <property type="component" value="Unassembled WGS sequence"/>
</dbReference>
<dbReference type="GO" id="GO:0005730">
    <property type="term" value="C:nucleolus"/>
    <property type="evidence" value="ECO:0007669"/>
    <property type="project" value="UniProtKB-SubCell"/>
</dbReference>
<dbReference type="GO" id="GO:0030688">
    <property type="term" value="C:preribosome, small subunit precursor"/>
    <property type="evidence" value="ECO:0007669"/>
    <property type="project" value="TreeGrafter"/>
</dbReference>
<dbReference type="GO" id="GO:0000462">
    <property type="term" value="P:maturation of SSU-rRNA from tricistronic rRNA transcript (SSU-rRNA, 5.8S rRNA, LSU-rRNA)"/>
    <property type="evidence" value="ECO:0007669"/>
    <property type="project" value="TreeGrafter"/>
</dbReference>
<dbReference type="InterPro" id="IPR019310">
    <property type="entry name" value="Efg1"/>
</dbReference>
<dbReference type="InterPro" id="IPR050786">
    <property type="entry name" value="EFG1_rRNA-proc"/>
</dbReference>
<dbReference type="PANTHER" id="PTHR33911">
    <property type="entry name" value="RRNA-PROCESSING PROTEIN EFG1"/>
    <property type="match status" value="1"/>
</dbReference>
<dbReference type="PANTHER" id="PTHR33911:SF1">
    <property type="entry name" value="RRNA-PROCESSING PROTEIN EFG1"/>
    <property type="match status" value="1"/>
</dbReference>
<dbReference type="Pfam" id="PF10153">
    <property type="entry name" value="Efg1"/>
    <property type="match status" value="1"/>
</dbReference>
<keyword id="KW-0175">Coiled coil</keyword>
<keyword id="KW-0539">Nucleus</keyword>
<keyword id="KW-1185">Reference proteome</keyword>
<keyword id="KW-0698">rRNA processing</keyword>
<protein>
    <recommendedName>
        <fullName>rRNA-processing protein efg1</fullName>
    </recommendedName>
</protein>
<organism>
    <name type="scientific">Neosartorya fischeri (strain ATCC 1020 / DSM 3700 / CBS 544.65 / FGSC A1164 / JCM 1740 / NRRL 181 / WB 181)</name>
    <name type="common">Aspergillus fischerianus</name>
    <dbReference type="NCBI Taxonomy" id="331117"/>
    <lineage>
        <taxon>Eukaryota</taxon>
        <taxon>Fungi</taxon>
        <taxon>Dikarya</taxon>
        <taxon>Ascomycota</taxon>
        <taxon>Pezizomycotina</taxon>
        <taxon>Eurotiomycetes</taxon>
        <taxon>Eurotiomycetidae</taxon>
        <taxon>Eurotiales</taxon>
        <taxon>Aspergillaceae</taxon>
        <taxon>Aspergillus</taxon>
        <taxon>Aspergillus subgen. Fumigati</taxon>
    </lineage>
</organism>
<name>EFG1P_NEOFI</name>
<evidence type="ECO:0000250" key="1"/>
<evidence type="ECO:0000255" key="2"/>
<evidence type="ECO:0000256" key="3">
    <source>
        <dbReference type="SAM" id="MobiDB-lite"/>
    </source>
</evidence>
<evidence type="ECO:0000305" key="4"/>
<gene>
    <name type="primary">efg1</name>
    <name type="ORF">NFIA_035240</name>
</gene>
<reference key="1">
    <citation type="journal article" date="2008" name="PLoS Genet.">
        <title>Genomic islands in the pathogenic filamentous fungus Aspergillus fumigatus.</title>
        <authorList>
            <person name="Fedorova N.D."/>
            <person name="Khaldi N."/>
            <person name="Joardar V.S."/>
            <person name="Maiti R."/>
            <person name="Amedeo P."/>
            <person name="Anderson M.J."/>
            <person name="Crabtree J."/>
            <person name="Silva J.C."/>
            <person name="Badger J.H."/>
            <person name="Albarraq A."/>
            <person name="Angiuoli S."/>
            <person name="Bussey H."/>
            <person name="Bowyer P."/>
            <person name="Cotty P.J."/>
            <person name="Dyer P.S."/>
            <person name="Egan A."/>
            <person name="Galens K."/>
            <person name="Fraser-Liggett C.M."/>
            <person name="Haas B.J."/>
            <person name="Inman J.M."/>
            <person name="Kent R."/>
            <person name="Lemieux S."/>
            <person name="Malavazi I."/>
            <person name="Orvis J."/>
            <person name="Roemer T."/>
            <person name="Ronning C.M."/>
            <person name="Sundaram J.P."/>
            <person name="Sutton G."/>
            <person name="Turner G."/>
            <person name="Venter J.C."/>
            <person name="White O.R."/>
            <person name="Whitty B.R."/>
            <person name="Youngman P."/>
            <person name="Wolfe K.H."/>
            <person name="Goldman G.H."/>
            <person name="Wortman J.R."/>
            <person name="Jiang B."/>
            <person name="Denning D.W."/>
            <person name="Nierman W.C."/>
        </authorList>
    </citation>
    <scope>NUCLEOTIDE SEQUENCE [LARGE SCALE GENOMIC DNA]</scope>
    <source>
        <strain>ATCC 1020 / DSM 3700 / CBS 544.65 / FGSC A1164 / JCM 1740 / NRRL 181 / WB 181</strain>
    </source>
</reference>
<comment type="function">
    <text evidence="1">Involved in rRNA processing.</text>
</comment>
<comment type="subcellular location">
    <subcellularLocation>
        <location evidence="1">Nucleus</location>
        <location evidence="1">Nucleolus</location>
    </subcellularLocation>
</comment>
<comment type="similarity">
    <text evidence="4">Belongs to the EFG1 family.</text>
</comment>
<comment type="sequence caution" evidence="4">
    <conflict type="erroneous gene model prediction">
        <sequence resource="EMBL-CDS" id="EAW23956"/>
    </conflict>
</comment>
<sequence length="318" mass="36443">MPREFSREKRSASDSTTTSKRKYREGSEDSLPAKKKKIHPPKHEHNHPSVNELKKRIRDVKRLLNRVDLPADARIVQERALAGYEKDLDDELARRHRSQMIKKYHFVRFLDRKAASKDLKRLLRREQEISNSDLDRAAKKEKLAALAGKIHAAQVNHNYTIYYPLTQKYVALYAEQKKKKKESSAQSEKPNEPEAEVVSKLIYDTTGERPPVWRVVEKCMEDGTLDLLREGKLDDGEGEKSSQAPEQKKSKKSTDDDQSTRNKSSTEKVSDKASGKSRKSGDKQDSKPKRSAAMEGAYWSANEHDNDDNESDGGFFEE</sequence>